<name>C1QBP_MOUSE</name>
<sequence>MLPLLRCVPRSLGAASGLRTAIPAQPLRHLLQPAPRPCLRPFGLLSVRAGSARRSGLLQPPVPCACGCGALHTEGDKAFVEFLTDEIKEEKKIQKHKSLPKMSGDWELEVNGTEAKLLRKVAGEKITVTFNINNSIPPTFDGEEEPSQGQKAEEQEPERTSTPNFVVEVTKTDGKKTLVLDCHYPEDEIGHEDEAESDIFSIKEVSFQATGDSEWRDTNYTLNTDSLDWALYDHLMDFLADRGVDNTFADELVELSTALEHQEYITFLEDLKSFVKNQ</sequence>
<feature type="transit peptide" description="Mitochondrion" evidence="1">
    <location>
        <begin position="1"/>
        <end position="70"/>
    </location>
</feature>
<feature type="chain" id="PRO_0000018591" description="Complement component 1 Q subcomponent-binding protein, mitochondrial">
    <location>
        <begin position="71"/>
        <end position="278"/>
    </location>
</feature>
<feature type="region of interest" description="C1q binding" evidence="1">
    <location>
        <begin position="73"/>
        <end position="90"/>
    </location>
</feature>
<feature type="region of interest" description="Disordered" evidence="4">
    <location>
        <begin position="133"/>
        <end position="162"/>
    </location>
</feature>
<feature type="region of interest" description="Interaction with MAVS" evidence="1">
    <location>
        <begin position="165"/>
        <end position="209"/>
    </location>
</feature>
<feature type="modified residue" description="N6-acetyllysine" evidence="14">
    <location>
        <position position="88"/>
    </location>
</feature>
<feature type="modified residue" description="N6-acetyllysine" evidence="14">
    <location>
        <position position="91"/>
    </location>
</feature>
<feature type="modified residue" description="Phosphotyrosine" evidence="3">
    <location>
        <position position="184"/>
    </location>
</feature>
<feature type="modified residue" description="Phosphoserine" evidence="13">
    <location>
        <position position="197"/>
    </location>
</feature>
<feature type="modified residue" description="Phosphoserine" evidence="13">
    <location>
        <position position="201"/>
    </location>
</feature>
<feature type="modified residue" description="Phosphothreonine" evidence="3">
    <location>
        <position position="210"/>
    </location>
</feature>
<feature type="mutagenesis site" description="Impairs RNA binding and mitochondrial translation; when associated with A-92." evidence="9">
    <original>K</original>
    <variation>A</variation>
    <location>
        <position position="88"/>
    </location>
</feature>
<feature type="mutagenesis site" description="Impairs RNA binding and mitochondrial translation; when associated with A-88." evidence="9">
    <original>K</original>
    <variation>A</variation>
    <location>
        <position position="92"/>
    </location>
</feature>
<feature type="mutagenesis site" description="Partially able to rescue mitochondrial respiratory chain defects observed in knockout mice." evidence="10">
    <original>G</original>
    <variation>W</variation>
    <location>
        <position position="243"/>
    </location>
</feature>
<feature type="mutagenesis site" description="Not able to rescue mitochondrial respiratory chain defects observed in knockout mice." evidence="10">
    <original>L</original>
    <variation>P</variation>
    <location>
        <position position="271"/>
    </location>
</feature>
<keyword id="KW-0007">Acetylation</keyword>
<keyword id="KW-1064">Adaptive immunity</keyword>
<keyword id="KW-0053">Apoptosis</keyword>
<keyword id="KW-1003">Cell membrane</keyword>
<keyword id="KW-0180">Complement pathway</keyword>
<keyword id="KW-0963">Cytoplasm</keyword>
<keyword id="KW-0903">Direct protein sequencing</keyword>
<keyword id="KW-0227">DNA damage</keyword>
<keyword id="KW-0391">Immunity</keyword>
<keyword id="KW-0399">Innate immunity</keyword>
<keyword id="KW-0472">Membrane</keyword>
<keyword id="KW-0496">Mitochondrion</keyword>
<keyword id="KW-0507">mRNA processing</keyword>
<keyword id="KW-0508">mRNA splicing</keyword>
<keyword id="KW-0539">Nucleus</keyword>
<keyword id="KW-0597">Phosphoprotein</keyword>
<keyword id="KW-1185">Reference proteome</keyword>
<keyword id="KW-0690">Ribosome biogenesis</keyword>
<keyword id="KW-0964">Secreted</keyword>
<keyword id="KW-0804">Transcription</keyword>
<keyword id="KW-0805">Transcription regulation</keyword>
<keyword id="KW-0809">Transit peptide</keyword>
<gene>
    <name type="primary">C1qbp</name>
    <name type="synonym">Gc1qbp</name>
</gene>
<accession>O35658</accession>
<evidence type="ECO:0000250" key="1"/>
<evidence type="ECO:0000250" key="2">
    <source>
        <dbReference type="UniProtKB" id="O35796"/>
    </source>
</evidence>
<evidence type="ECO:0000250" key="3">
    <source>
        <dbReference type="UniProtKB" id="Q07021"/>
    </source>
</evidence>
<evidence type="ECO:0000256" key="4">
    <source>
        <dbReference type="SAM" id="MobiDB-lite"/>
    </source>
</evidence>
<evidence type="ECO:0000269" key="5">
    <source>
    </source>
</evidence>
<evidence type="ECO:0000269" key="6">
    <source>
    </source>
</evidence>
<evidence type="ECO:0000269" key="7">
    <source>
    </source>
</evidence>
<evidence type="ECO:0000269" key="8">
    <source>
    </source>
</evidence>
<evidence type="ECO:0000269" key="9">
    <source>
    </source>
</evidence>
<evidence type="ECO:0000269" key="10">
    <source>
    </source>
</evidence>
<evidence type="ECO:0000269" key="11">
    <source>
    </source>
</evidence>
<evidence type="ECO:0000305" key="12"/>
<evidence type="ECO:0007744" key="13">
    <source>
    </source>
</evidence>
<evidence type="ECO:0007744" key="14">
    <source>
    </source>
</evidence>
<proteinExistence type="evidence at protein level"/>
<comment type="function">
    <text evidence="3 5 6 7 9 10">Is believed to be a multifunctional and multicompartmental protein involved in inflammation and infection processes, ribosome biogenesis, protein synthesis in mitochondria, regulation of apoptosis, transcriptional regulation and pre-mRNA splicing. At the cell surface is thought to act as an endothelial receptor for plasma proteins of the complement and kallikrein-kinin cascades. Putative receptor for C1q; specifically binds to the globular 'heads' of C1q thus inhibiting C1; may perform the receptor function through a complex with C1qR/CD93 (PubMed:9414106). In complex with cytokeratin-1/KRT1 is a high affinity receptor for kininogen-1/HMWK. Can also bind other plasma proteins, such as coagulation factor XII leading to its autoactivation. May function to bind initially fluid kininogen-1 to the cell membrane. The secreted form may enhance both extrinsic and intrinsic coagulation pathways. It is postulated that the cell surface form requires docking with transmembrane proteins for downstream signaling which might be specific for a cell-type or response. By acting as C1q receptor is involved in chemotaxis of immature dendritic cells and neutrophils and is proposed to signal through CD209/DC-SIGN on immature dendritic cells, through integrin alpha-4/beta-1 during trophoblast invasion of the decidua, and through integrin beta-1 during endothelial cell adhesion and spreading. Signaling involved in inhibition of innate immune response is implicating the PI3K-AKT/PKB pathway. Required for protein synthesis in mitochondria (PubMed:22904065, PubMed:28942965). In mitochondrial translation may be involved in formation of functional 55S mitoribosomes; the function seems to involve its RNA-binding activity (PubMed:22904065, PubMed:28942965). Acts as a RNA modification reader, which specifically recognizes and binds mitochondrial RNAs modified by C5-methylcytosine (m5C) in response to stress, and promotes recruitment of the mitochondrial degradosome complex, leading to their degradation (By similarity). May be involved in the nucleolar ribosome maturation process; the function may involve the exchange of FBL for RRP1 in the association with pre-ribosome particles. Involved in regulation of RNA splicing by inhibiting the RNA-binding capacity of SRSF1 and its phosphorylation. Is required for the nuclear translocation of splicing factor U2AF1L4 (PubMed:18460468). Involved in regulation of CDKN2A- and HRK-mediated apoptosis. May be involved in regulation of FOXC1 transcriptional activity and NFY/CCAAT-binding factor complex-mediated transcription. May play a role in antibacterial defense (By similarity). Acts as a regulator of DNA repair via homologous recombination by inhibiting the activity of MRE11: interacts with unphosphorylated MRE11 and RAD50 in absence of DNA damage, preventing formation and activity of the MRN complex (By similarity). Following DNA damage, dissociates from phosphorylated MRE11, allowing formation of the MRN complex (By similarity).</text>
</comment>
<comment type="subunit">
    <text evidence="2 3 5 7 8">Homotrimer; three monomers form a donut-shaped structure with an unusually asymmetric charge distribution on the surface (PubMed:22904065). Interacts with CDK13, HRK, VTN, NFYB, ADRA1B, FOXC1, DDX21, DDX50, NCL, SRSF1 and SRSF9 (PubMed:17486078). Interacts with CD93; the association may represent a cell surface C1q receptor. Interacts with KRT1; the association represents a cell surface kininogen receptor. Interacts with CD209; the interaction is indicative for a C1q:C1QBP:CD209 signaling complex. Interacts with FBL and RRP1; the respective interactions with C1QBP are competitive. Probably associates with the mitoribosome. Interacts with MAVS; the interaction occurs upon viral transfection. Interacts with PPIF (PubMed:20950273). Interacts with U2AF1L4 (PubMed:18460468). Interacts with PLEKHN1 (By similarity). Interacts with VGF-derived peptide TLQP-21 (By similarity). Interacts with MRE11 and RAD50; forming the MRC (MRE11-RAD50-C1QBP) complex that inhibits the activity of MRE11 (By similarity).</text>
</comment>
<comment type="interaction">
    <interactant intactId="EBI-642072">
        <id>O35658</id>
    </interactant>
    <interactant intactId="EBI-4288480">
        <id>Q8BGJ9</id>
        <label>U2af1l4</label>
    </interactant>
    <organismsDiffer>false</organismsDiffer>
    <experiments>4</experiments>
</comment>
<comment type="subcellular location">
    <subcellularLocation>
        <location evidence="5 6">Mitochondrion matrix</location>
    </subcellularLocation>
    <subcellularLocation>
        <location evidence="3">Nucleus</location>
    </subcellularLocation>
    <subcellularLocation>
        <location evidence="3">Cell membrane</location>
        <topology evidence="3">Peripheral membrane protein</topology>
        <orientation evidence="3">Extracellular side</orientation>
    </subcellularLocation>
    <subcellularLocation>
        <location evidence="3">Secreted</location>
    </subcellularLocation>
    <subcellularLocation>
        <location evidence="3">Cytoplasm</location>
    </subcellularLocation>
    <subcellularLocation>
        <location evidence="3">Nucleus</location>
        <location evidence="3">Nucleolus</location>
    </subcellularLocation>
    <text evidence="3 5 6">Seems to be predominantly localized to mitochondria (PubMed:17486078, PubMed:18166172). Secreted by activated lymphocytes (By similarity).</text>
</comment>
<comment type="tissue specificity">
    <text evidence="11">Ubiquitous.</text>
</comment>
<comment type="disruption phenotype">
    <text evidence="9">Embryonic lethal between 10.5 and 11.5 dpc. Severe dysfunction of the mitochondrial respiratory chain because of severely impaired mitochondrial protein synthesis.</text>
</comment>
<comment type="similarity">
    <text evidence="12">Belongs to the MAM33 family.</text>
</comment>
<organism>
    <name type="scientific">Mus musculus</name>
    <name type="common">Mouse</name>
    <dbReference type="NCBI Taxonomy" id="10090"/>
    <lineage>
        <taxon>Eukaryota</taxon>
        <taxon>Metazoa</taxon>
        <taxon>Chordata</taxon>
        <taxon>Craniata</taxon>
        <taxon>Vertebrata</taxon>
        <taxon>Euteleostomi</taxon>
        <taxon>Mammalia</taxon>
        <taxon>Eutheria</taxon>
        <taxon>Euarchontoglires</taxon>
        <taxon>Glires</taxon>
        <taxon>Rodentia</taxon>
        <taxon>Myomorpha</taxon>
        <taxon>Muroidea</taxon>
        <taxon>Muridae</taxon>
        <taxon>Murinae</taxon>
        <taxon>Mus</taxon>
        <taxon>Mus</taxon>
    </lineage>
</organism>
<protein>
    <recommendedName>
        <fullName>Complement component 1 Q subcomponent-binding protein, mitochondrial</fullName>
    </recommendedName>
    <alternativeName>
        <fullName>GC1q-R protein</fullName>
    </alternativeName>
    <alternativeName>
        <fullName>Glycoprotein gC1qBP</fullName>
        <shortName>C1qBP</shortName>
    </alternativeName>
</protein>
<reference key="1">
    <citation type="journal article" date="1997" name="FEBS Lett.">
        <title>Characterisation of the rat and mouse homologues of gC1qBP, a 33 kDa glycoprotein that binds to the globular 'heads' of C1q.</title>
        <authorList>
            <person name="Lynch N.J."/>
            <person name="Reid K.B."/>
            <person name="van den Berg R.H."/>
            <person name="Daha M.R."/>
            <person name="Leigh L.A."/>
            <person name="Ghebrehiwet B."/>
            <person name="Lim W.B."/>
            <person name="Schwaeble W.J."/>
        </authorList>
    </citation>
    <scope>NUCLEOTIDE SEQUENCE [MRNA]</scope>
    <scope>FUNCTION</scope>
    <scope>TISSUE SPECIFICITY</scope>
    <source>
        <strain>C57BL/6 X CBA</strain>
    </source>
</reference>
<reference key="2">
    <citation type="submission" date="2007-04" db="UniProtKB">
        <authorList>
            <person name="Lubec G."/>
            <person name="Kang S.U."/>
        </authorList>
    </citation>
    <scope>PROTEIN SEQUENCE OF 78-91 AND 102-119</scope>
    <scope>IDENTIFICATION BY MASS SPECTROMETRY</scope>
    <source>
        <strain>C57BL/6J</strain>
        <tissue>Brain</tissue>
    </source>
</reference>
<reference key="3">
    <citation type="journal article" date="2007" name="Oncogene">
        <title>The autophagic inducer smARF interacts with and is stabilized by the mitochondrial p32 protein.</title>
        <authorList>
            <person name="Reef S."/>
            <person name="Shifman O."/>
            <person name="Oren M."/>
            <person name="Kimchi A."/>
        </authorList>
    </citation>
    <scope>FUNCTION</scope>
    <scope>INTERACTION WITH CDKN2A</scope>
    <scope>SUBCELLULAR LOCATION</scope>
</reference>
<reference key="4">
    <citation type="journal article" date="2008" name="Exp. Cell Res.">
        <title>Excessive reactive oxygen species induces apoptosis in fibroblasts: role of mitochondrially accumulated hyaluronic acid binding protein 1 (HABP1/p32/gC1qR).</title>
        <authorList>
            <person name="Chowdhury A.R."/>
            <person name="Ghosh I."/>
            <person name="Datta K."/>
        </authorList>
    </citation>
    <scope>FUNCTION</scope>
    <scope>SUBCELLULAR LOCATION</scope>
</reference>
<reference key="5">
    <citation type="journal article" date="2008" name="J. Biol. Chem.">
        <title>Differential isoform expression and interaction with the P32 regulatory protein controls the subcellular localization of the splicing factor U2AF26.</title>
        <authorList>
            <person name="Heyd F."/>
            <person name="Carmo-Fonseca M."/>
            <person name="Moroy T."/>
        </authorList>
    </citation>
    <scope>FUNCTION</scope>
    <scope>INTERACTION WITH U2AF1L4</scope>
</reference>
<reference key="6">
    <citation type="journal article" date="2010" name="Cell">
        <title>A tissue-specific atlas of mouse protein phosphorylation and expression.</title>
        <authorList>
            <person name="Huttlin E.L."/>
            <person name="Jedrychowski M.P."/>
            <person name="Elias J.E."/>
            <person name="Goswami T."/>
            <person name="Rad R."/>
            <person name="Beausoleil S.A."/>
            <person name="Villen J."/>
            <person name="Haas W."/>
            <person name="Sowa M.E."/>
            <person name="Gygi S.P."/>
        </authorList>
    </citation>
    <scope>PHOSPHORYLATION [LARGE SCALE ANALYSIS] AT SER-197 AND SER-201</scope>
    <scope>IDENTIFICATION BY MASS SPECTROMETRY [LARGE SCALE ANALYSIS]</scope>
    <source>
        <tissue>Brain</tissue>
        <tissue>Brown adipose tissue</tissue>
        <tissue>Heart</tissue>
        <tissue>Kidney</tissue>
        <tissue>Liver</tissue>
        <tissue>Lung</tissue>
        <tissue>Pancreas</tissue>
        <tissue>Spleen</tissue>
        <tissue>Testis</tissue>
    </source>
</reference>
<reference key="7">
    <citation type="journal article" date="2011" name="Biochem. J.">
        <title>Complement 1q-binding protein inhibits the mitochondrial permeability transition pore and protects against oxidative stress-induced death.</title>
        <authorList>
            <person name="McGee A.M."/>
            <person name="Baines C.P."/>
        </authorList>
    </citation>
    <scope>INTERACTION WITH PPIF</scope>
</reference>
<reference key="8">
    <citation type="journal article" date="2012" name="Nucleic Acids Res.">
        <title>p32/gC1qR is indispensable for fetal development and mitochondrial translation: importance of its RNA-binding ability.</title>
        <authorList>
            <person name="Yagi M."/>
            <person name="Uchiumi T."/>
            <person name="Takazaki S."/>
            <person name="Okuno B."/>
            <person name="Nomura M."/>
            <person name="Yoshida S."/>
            <person name="Kanki T."/>
            <person name="Kang D."/>
        </authorList>
    </citation>
    <scope>FUNCTION</scope>
    <scope>SUBUNIT</scope>
    <scope>DISRUPTION PHENOTYPE</scope>
    <scope>MUTAGENESIS OF LYS-88 AND LYS-92</scope>
</reference>
<reference key="9">
    <citation type="journal article" date="2013" name="Proc. Natl. Acad. Sci. U.S.A.">
        <title>Label-free quantitative proteomics of the lysine acetylome in mitochondria identifies substrates of SIRT3 in metabolic pathways.</title>
        <authorList>
            <person name="Rardin M.J."/>
            <person name="Newman J.C."/>
            <person name="Held J.M."/>
            <person name="Cusack M.P."/>
            <person name="Sorensen D.J."/>
            <person name="Li B."/>
            <person name="Schilling B."/>
            <person name="Mooney S.D."/>
            <person name="Kahn C.R."/>
            <person name="Verdin E."/>
            <person name="Gibson B.W."/>
        </authorList>
    </citation>
    <scope>ACETYLATION [LARGE SCALE ANALYSIS] AT LYS-88 AND LYS-91</scope>
    <scope>IDENTIFICATION BY MASS SPECTROMETRY [LARGE SCALE ANALYSIS]</scope>
    <source>
        <tissue>Liver</tissue>
    </source>
</reference>
<reference key="10">
    <citation type="journal article" date="2017" name="Am. J. Hum. Genet.">
        <title>Biallelic C1QBP mutations cause severe neonatal-, childhood-, or later-onset cardiomyopathy associated with combined respiratory-chain deficiencies.</title>
        <authorList>
            <person name="Feichtinger R.G."/>
            <person name="Olahova M."/>
            <person name="Kishita Y."/>
            <person name="Garone C."/>
            <person name="Kremer L.S."/>
            <person name="Yagi M."/>
            <person name="Uchiumi T."/>
            <person name="Jourdain A.A."/>
            <person name="Thompson K."/>
            <person name="D'Souza A.R."/>
            <person name="Kopajtich R."/>
            <person name="Alston C.L."/>
            <person name="Koch J."/>
            <person name="Sperl W."/>
            <person name="Mastantuono E."/>
            <person name="Strom T.M."/>
            <person name="Wortmann S.B."/>
            <person name="Meitinger T."/>
            <person name="Pierre G."/>
            <person name="Chinnery P.F."/>
            <person name="Chrzanowska-Lightowlers Z.M."/>
            <person name="Lightowlers R.N."/>
            <person name="DiMauro S."/>
            <person name="Calvo S.E."/>
            <person name="Mootha V.K."/>
            <person name="Moggio M."/>
            <person name="Sciacco M."/>
            <person name="Comi G.P."/>
            <person name="Ronchi D."/>
            <person name="Murayama K."/>
            <person name="Ohtake A."/>
            <person name="Rebelo-Guiomar P."/>
            <person name="Kohda M."/>
            <person name="Kang D."/>
            <person name="Mayr J.A."/>
            <person name="Taylor R.W."/>
            <person name="Okazaki Y."/>
            <person name="Minczuk M."/>
            <person name="Prokisch H."/>
        </authorList>
    </citation>
    <scope>FUNCTION</scope>
    <scope>MUTAGENESIS OF GLY-243 AND LEU-271</scope>
</reference>
<dbReference type="EMBL" id="AJ001101">
    <property type="protein sequence ID" value="CAA04530.1"/>
    <property type="molecule type" value="mRNA"/>
</dbReference>
<dbReference type="SMR" id="O35658"/>
<dbReference type="DIP" id="DIP-32249N"/>
<dbReference type="FunCoup" id="O35658">
    <property type="interactions" value="1656"/>
</dbReference>
<dbReference type="IntAct" id="O35658">
    <property type="interactions" value="61"/>
</dbReference>
<dbReference type="STRING" id="10090.ENSMUSP00000077612"/>
<dbReference type="CarbonylDB" id="O35658"/>
<dbReference type="GlyGen" id="O35658">
    <property type="glycosylation" value="1 site, 1 O-linked glycan (1 site)"/>
</dbReference>
<dbReference type="iPTMnet" id="O35658"/>
<dbReference type="PhosphoSitePlus" id="O35658"/>
<dbReference type="SwissPalm" id="O35658"/>
<dbReference type="jPOST" id="O35658"/>
<dbReference type="PaxDb" id="10090-ENSMUSP00000077612"/>
<dbReference type="PeptideAtlas" id="O35658"/>
<dbReference type="ProteomicsDB" id="273803"/>
<dbReference type="Pumba" id="O35658"/>
<dbReference type="TopDownProteomics" id="O35658"/>
<dbReference type="AGR" id="MGI:1194505"/>
<dbReference type="MGI" id="MGI:1194505">
    <property type="gene designation" value="C1qbp"/>
</dbReference>
<dbReference type="eggNOG" id="KOG4024">
    <property type="taxonomic scope" value="Eukaryota"/>
</dbReference>
<dbReference type="InParanoid" id="O35658"/>
<dbReference type="Reactome" id="R-MMU-140837">
    <property type="pathway name" value="Intrinsic Pathway of Fibrin Clot Formation"/>
</dbReference>
<dbReference type="Reactome" id="R-MMU-8980692">
    <property type="pathway name" value="RHOA GTPase cycle"/>
</dbReference>
<dbReference type="Reactome" id="R-MMU-9013106">
    <property type="pathway name" value="RHOC GTPase cycle"/>
</dbReference>
<dbReference type="ChiTaRS" id="C1qbp">
    <property type="organism name" value="mouse"/>
</dbReference>
<dbReference type="PRO" id="PR:O35658"/>
<dbReference type="Proteomes" id="UP000000589">
    <property type="component" value="Unplaced"/>
</dbReference>
<dbReference type="RNAct" id="O35658">
    <property type="molecule type" value="protein"/>
</dbReference>
<dbReference type="GO" id="GO:0005737">
    <property type="term" value="C:cytoplasm"/>
    <property type="evidence" value="ECO:0000250"/>
    <property type="project" value="UniProtKB"/>
</dbReference>
<dbReference type="GO" id="GO:0005576">
    <property type="term" value="C:extracellular region"/>
    <property type="evidence" value="ECO:0007669"/>
    <property type="project" value="UniProtKB-SubCell"/>
</dbReference>
<dbReference type="GO" id="GO:0005759">
    <property type="term" value="C:mitochondrial matrix"/>
    <property type="evidence" value="ECO:0007669"/>
    <property type="project" value="UniProtKB-SubCell"/>
</dbReference>
<dbReference type="GO" id="GO:0005739">
    <property type="term" value="C:mitochondrion"/>
    <property type="evidence" value="ECO:0000314"/>
    <property type="project" value="UniProtKB"/>
</dbReference>
<dbReference type="GO" id="GO:0005730">
    <property type="term" value="C:nucleolus"/>
    <property type="evidence" value="ECO:0007669"/>
    <property type="project" value="UniProtKB-SubCell"/>
</dbReference>
<dbReference type="GO" id="GO:0005634">
    <property type="term" value="C:nucleus"/>
    <property type="evidence" value="ECO:0000250"/>
    <property type="project" value="UniProtKB"/>
</dbReference>
<dbReference type="GO" id="GO:0005886">
    <property type="term" value="C:plasma membrane"/>
    <property type="evidence" value="ECO:0007669"/>
    <property type="project" value="UniProtKB-SubCell"/>
</dbReference>
<dbReference type="GO" id="GO:0031690">
    <property type="term" value="F:adrenergic receptor binding"/>
    <property type="evidence" value="ECO:0000250"/>
    <property type="project" value="UniProtKB"/>
</dbReference>
<dbReference type="GO" id="GO:0001849">
    <property type="term" value="F:complement component C1q complex binding"/>
    <property type="evidence" value="ECO:0000250"/>
    <property type="project" value="UniProtKB"/>
</dbReference>
<dbReference type="GO" id="GO:0004857">
    <property type="term" value="F:enzyme inhibitor activity"/>
    <property type="evidence" value="ECO:0000250"/>
    <property type="project" value="UniProtKB"/>
</dbReference>
<dbReference type="GO" id="GO:0005540">
    <property type="term" value="F:hyaluronic acid binding"/>
    <property type="evidence" value="ECO:0000250"/>
    <property type="project" value="UniProtKB"/>
</dbReference>
<dbReference type="GO" id="GO:0030984">
    <property type="term" value="F:kininogen binding"/>
    <property type="evidence" value="ECO:0000250"/>
    <property type="project" value="UniProtKB"/>
</dbReference>
<dbReference type="GO" id="GO:0097177">
    <property type="term" value="F:mitochondrial ribosome binding"/>
    <property type="evidence" value="ECO:0000314"/>
    <property type="project" value="UniProtKB"/>
</dbReference>
<dbReference type="GO" id="GO:0003729">
    <property type="term" value="F:mRNA binding"/>
    <property type="evidence" value="ECO:0000314"/>
    <property type="project" value="UniProtKB"/>
</dbReference>
<dbReference type="GO" id="GO:0003714">
    <property type="term" value="F:transcription corepressor activity"/>
    <property type="evidence" value="ECO:0000250"/>
    <property type="project" value="UniProtKB"/>
</dbReference>
<dbReference type="GO" id="GO:0006915">
    <property type="term" value="P:apoptotic process"/>
    <property type="evidence" value="ECO:0007669"/>
    <property type="project" value="UniProtKB-KW"/>
</dbReference>
<dbReference type="GO" id="GO:0006958">
    <property type="term" value="P:complement activation, classical pathway"/>
    <property type="evidence" value="ECO:0007669"/>
    <property type="project" value="UniProtKB-KW"/>
</dbReference>
<dbReference type="GO" id="GO:0042256">
    <property type="term" value="P:cytosolic ribosome assembly"/>
    <property type="evidence" value="ECO:0000315"/>
    <property type="project" value="UniProtKB"/>
</dbReference>
<dbReference type="GO" id="GO:0006974">
    <property type="term" value="P:DNA damage response"/>
    <property type="evidence" value="ECO:0007669"/>
    <property type="project" value="UniProtKB-KW"/>
</dbReference>
<dbReference type="GO" id="GO:0045087">
    <property type="term" value="P:innate immune response"/>
    <property type="evidence" value="ECO:0007669"/>
    <property type="project" value="UniProtKB-KW"/>
</dbReference>
<dbReference type="GO" id="GO:0006397">
    <property type="term" value="P:mRNA processing"/>
    <property type="evidence" value="ECO:0007669"/>
    <property type="project" value="UniProtKB-KW"/>
</dbReference>
<dbReference type="GO" id="GO:0050687">
    <property type="term" value="P:negative regulation of defense response to virus"/>
    <property type="evidence" value="ECO:0000250"/>
    <property type="project" value="UniProtKB"/>
</dbReference>
<dbReference type="GO" id="GO:2000042">
    <property type="term" value="P:negative regulation of double-strand break repair via homologous recombination"/>
    <property type="evidence" value="ECO:0000250"/>
    <property type="project" value="UniProtKB"/>
</dbReference>
<dbReference type="GO" id="GO:0032695">
    <property type="term" value="P:negative regulation of interleukin-12 production"/>
    <property type="evidence" value="ECO:0000250"/>
    <property type="project" value="UniProtKB"/>
</dbReference>
<dbReference type="GO" id="GO:0039534">
    <property type="term" value="P:negative regulation of MDA-5 signaling pathway"/>
    <property type="evidence" value="ECO:0000250"/>
    <property type="project" value="UniProtKB"/>
</dbReference>
<dbReference type="GO" id="GO:0048025">
    <property type="term" value="P:negative regulation of mRNA splicing, via spliceosome"/>
    <property type="evidence" value="ECO:0000250"/>
    <property type="project" value="UniProtKB"/>
</dbReference>
<dbReference type="GO" id="GO:0039536">
    <property type="term" value="P:negative regulation of RIG-I signaling pathway"/>
    <property type="evidence" value="ECO:0000250"/>
    <property type="project" value="UniProtKB"/>
</dbReference>
<dbReference type="GO" id="GO:0000122">
    <property type="term" value="P:negative regulation of transcription by RNA polymerase II"/>
    <property type="evidence" value="ECO:0000250"/>
    <property type="project" value="UniProtKB"/>
</dbReference>
<dbReference type="GO" id="GO:0032689">
    <property type="term" value="P:negative regulation of type II interferon production"/>
    <property type="evidence" value="ECO:0000250"/>
    <property type="project" value="UniProtKB"/>
</dbReference>
<dbReference type="GO" id="GO:0043491">
    <property type="term" value="P:phosphatidylinositol 3-kinase/protein kinase B signal transduction"/>
    <property type="evidence" value="ECO:0000250"/>
    <property type="project" value="UniProtKB"/>
</dbReference>
<dbReference type="GO" id="GO:0043065">
    <property type="term" value="P:positive regulation of apoptotic process"/>
    <property type="evidence" value="ECO:0000250"/>
    <property type="project" value="UniProtKB"/>
</dbReference>
<dbReference type="GO" id="GO:0045785">
    <property type="term" value="P:positive regulation of cell adhesion"/>
    <property type="evidence" value="ECO:0000250"/>
    <property type="project" value="UniProtKB"/>
</dbReference>
<dbReference type="GO" id="GO:2000510">
    <property type="term" value="P:positive regulation of dendritic cell chemotaxis"/>
    <property type="evidence" value="ECO:0000250"/>
    <property type="project" value="UniProtKB"/>
</dbReference>
<dbReference type="GO" id="GO:0070131">
    <property type="term" value="P:positive regulation of mitochondrial translation"/>
    <property type="evidence" value="ECO:0000315"/>
    <property type="project" value="UniProtKB"/>
</dbReference>
<dbReference type="GO" id="GO:0090023">
    <property type="term" value="P:positive regulation of neutrophil chemotaxis"/>
    <property type="evidence" value="ECO:0000250"/>
    <property type="project" value="UniProtKB"/>
</dbReference>
<dbReference type="GO" id="GO:0051897">
    <property type="term" value="P:positive regulation of phosphatidylinositol 3-kinase/protein kinase B signal transduction"/>
    <property type="evidence" value="ECO:0000250"/>
    <property type="project" value="UniProtKB"/>
</dbReference>
<dbReference type="GO" id="GO:1900026">
    <property type="term" value="P:positive regulation of substrate adhesion-dependent cell spreading"/>
    <property type="evidence" value="ECO:0000250"/>
    <property type="project" value="UniProtKB"/>
</dbReference>
<dbReference type="GO" id="GO:1901165">
    <property type="term" value="P:positive regulation of trophoblast cell migration"/>
    <property type="evidence" value="ECO:0000250"/>
    <property type="project" value="UniProtKB"/>
</dbReference>
<dbReference type="GO" id="GO:0030449">
    <property type="term" value="P:regulation of complement activation"/>
    <property type="evidence" value="ECO:0000250"/>
    <property type="project" value="UniProtKB"/>
</dbReference>
<dbReference type="GO" id="GO:0008380">
    <property type="term" value="P:RNA splicing"/>
    <property type="evidence" value="ECO:0007669"/>
    <property type="project" value="UniProtKB-KW"/>
</dbReference>
<dbReference type="FunFam" id="3.10.280.10:FF:000001">
    <property type="entry name" value="Complement component 1 Q subcomponent-binding protein, mitochondrial"/>
    <property type="match status" value="1"/>
</dbReference>
<dbReference type="Gene3D" id="3.10.280.10">
    <property type="entry name" value="Mitochondrial glycoprotein"/>
    <property type="match status" value="1"/>
</dbReference>
<dbReference type="InterPro" id="IPR003428">
    <property type="entry name" value="MAM33"/>
</dbReference>
<dbReference type="InterPro" id="IPR036561">
    <property type="entry name" value="MAM33_sf"/>
</dbReference>
<dbReference type="PANTHER" id="PTHR10826">
    <property type="entry name" value="COMPLEMENT COMPONENT 1"/>
    <property type="match status" value="1"/>
</dbReference>
<dbReference type="PANTHER" id="PTHR10826:SF1">
    <property type="entry name" value="COMPLEMENT COMPONENT 1 Q SUBCOMPONENT-BINDING PROTEIN, MITOCHONDRIAL"/>
    <property type="match status" value="1"/>
</dbReference>
<dbReference type="Pfam" id="PF02330">
    <property type="entry name" value="MAM33"/>
    <property type="match status" value="1"/>
</dbReference>
<dbReference type="SUPFAM" id="SSF54529">
    <property type="entry name" value="Mitochondrial glycoprotein MAM33-like"/>
    <property type="match status" value="1"/>
</dbReference>